<feature type="chain" id="PRO_0000116439" description="Uncharacterized protein C30D11.14c">
    <location>
        <begin position="1"/>
        <end position="534"/>
    </location>
</feature>
<feature type="region of interest" description="Disordered" evidence="1">
    <location>
        <begin position="1"/>
        <end position="150"/>
    </location>
</feature>
<feature type="region of interest" description="Disordered" evidence="1">
    <location>
        <begin position="252"/>
        <end position="284"/>
    </location>
</feature>
<feature type="region of interest" description="Disordered" evidence="1">
    <location>
        <begin position="383"/>
        <end position="434"/>
    </location>
</feature>
<feature type="compositionally biased region" description="Basic and acidic residues" evidence="1">
    <location>
        <begin position="8"/>
        <end position="67"/>
    </location>
</feature>
<feature type="compositionally biased region" description="Polar residues" evidence="1">
    <location>
        <begin position="102"/>
        <end position="113"/>
    </location>
</feature>
<feature type="compositionally biased region" description="Pro residues" evidence="1">
    <location>
        <begin position="130"/>
        <end position="141"/>
    </location>
</feature>
<feature type="compositionally biased region" description="Basic and acidic residues" evidence="1">
    <location>
        <begin position="252"/>
        <end position="262"/>
    </location>
</feature>
<feature type="compositionally biased region" description="Low complexity" evidence="1">
    <location>
        <begin position="263"/>
        <end position="272"/>
    </location>
</feature>
<feature type="compositionally biased region" description="Polar residues" evidence="1">
    <location>
        <begin position="393"/>
        <end position="408"/>
    </location>
</feature>
<keyword id="KW-1185">Reference proteome</keyword>
<evidence type="ECO:0000256" key="1">
    <source>
        <dbReference type="SAM" id="MobiDB-lite"/>
    </source>
</evidence>
<accession>Q09911</accession>
<reference key="1">
    <citation type="journal article" date="2002" name="Nature">
        <title>The genome sequence of Schizosaccharomyces pombe.</title>
        <authorList>
            <person name="Wood V."/>
            <person name="Gwilliam R."/>
            <person name="Rajandream M.A."/>
            <person name="Lyne M.H."/>
            <person name="Lyne R."/>
            <person name="Stewart A."/>
            <person name="Sgouros J.G."/>
            <person name="Peat N."/>
            <person name="Hayles J."/>
            <person name="Baker S.G."/>
            <person name="Basham D."/>
            <person name="Bowman S."/>
            <person name="Brooks K."/>
            <person name="Brown D."/>
            <person name="Brown S."/>
            <person name="Chillingworth T."/>
            <person name="Churcher C.M."/>
            <person name="Collins M."/>
            <person name="Connor R."/>
            <person name="Cronin A."/>
            <person name="Davis P."/>
            <person name="Feltwell T."/>
            <person name="Fraser A."/>
            <person name="Gentles S."/>
            <person name="Goble A."/>
            <person name="Hamlin N."/>
            <person name="Harris D.E."/>
            <person name="Hidalgo J."/>
            <person name="Hodgson G."/>
            <person name="Holroyd S."/>
            <person name="Hornsby T."/>
            <person name="Howarth S."/>
            <person name="Huckle E.J."/>
            <person name="Hunt S."/>
            <person name="Jagels K."/>
            <person name="James K.D."/>
            <person name="Jones L."/>
            <person name="Jones M."/>
            <person name="Leather S."/>
            <person name="McDonald S."/>
            <person name="McLean J."/>
            <person name="Mooney P."/>
            <person name="Moule S."/>
            <person name="Mungall K.L."/>
            <person name="Murphy L.D."/>
            <person name="Niblett D."/>
            <person name="Odell C."/>
            <person name="Oliver K."/>
            <person name="O'Neil S."/>
            <person name="Pearson D."/>
            <person name="Quail M.A."/>
            <person name="Rabbinowitsch E."/>
            <person name="Rutherford K.M."/>
            <person name="Rutter S."/>
            <person name="Saunders D."/>
            <person name="Seeger K."/>
            <person name="Sharp S."/>
            <person name="Skelton J."/>
            <person name="Simmonds M.N."/>
            <person name="Squares R."/>
            <person name="Squares S."/>
            <person name="Stevens K."/>
            <person name="Taylor K."/>
            <person name="Taylor R.G."/>
            <person name="Tivey A."/>
            <person name="Walsh S.V."/>
            <person name="Warren T."/>
            <person name="Whitehead S."/>
            <person name="Woodward J.R."/>
            <person name="Volckaert G."/>
            <person name="Aert R."/>
            <person name="Robben J."/>
            <person name="Grymonprez B."/>
            <person name="Weltjens I."/>
            <person name="Vanstreels E."/>
            <person name="Rieger M."/>
            <person name="Schaefer M."/>
            <person name="Mueller-Auer S."/>
            <person name="Gabel C."/>
            <person name="Fuchs M."/>
            <person name="Duesterhoeft A."/>
            <person name="Fritzc C."/>
            <person name="Holzer E."/>
            <person name="Moestl D."/>
            <person name="Hilbert H."/>
            <person name="Borzym K."/>
            <person name="Langer I."/>
            <person name="Beck A."/>
            <person name="Lehrach H."/>
            <person name="Reinhardt R."/>
            <person name="Pohl T.M."/>
            <person name="Eger P."/>
            <person name="Zimmermann W."/>
            <person name="Wedler H."/>
            <person name="Wambutt R."/>
            <person name="Purnelle B."/>
            <person name="Goffeau A."/>
            <person name="Cadieu E."/>
            <person name="Dreano S."/>
            <person name="Gloux S."/>
            <person name="Lelaure V."/>
            <person name="Mottier S."/>
            <person name="Galibert F."/>
            <person name="Aves S.J."/>
            <person name="Xiang Z."/>
            <person name="Hunt C."/>
            <person name="Moore K."/>
            <person name="Hurst S.M."/>
            <person name="Lucas M."/>
            <person name="Rochet M."/>
            <person name="Gaillardin C."/>
            <person name="Tallada V.A."/>
            <person name="Garzon A."/>
            <person name="Thode G."/>
            <person name="Daga R.R."/>
            <person name="Cruzado L."/>
            <person name="Jimenez J."/>
            <person name="Sanchez M."/>
            <person name="del Rey F."/>
            <person name="Benito J."/>
            <person name="Dominguez A."/>
            <person name="Revuelta J.L."/>
            <person name="Moreno S."/>
            <person name="Armstrong J."/>
            <person name="Forsburg S.L."/>
            <person name="Cerutti L."/>
            <person name="Lowe T."/>
            <person name="McCombie W.R."/>
            <person name="Paulsen I."/>
            <person name="Potashkin J."/>
            <person name="Shpakovski G.V."/>
            <person name="Ussery D."/>
            <person name="Barrell B.G."/>
            <person name="Nurse P."/>
        </authorList>
    </citation>
    <scope>NUCLEOTIDE SEQUENCE [LARGE SCALE GENOMIC DNA]</scope>
    <source>
        <strain>972 / ATCC 24843</strain>
    </source>
</reference>
<proteinExistence type="predicted"/>
<name>YAJE_SCHPO</name>
<gene>
    <name type="ORF">SPAC30D11.14c</name>
</gene>
<organism>
    <name type="scientific">Schizosaccharomyces pombe (strain 972 / ATCC 24843)</name>
    <name type="common">Fission yeast</name>
    <dbReference type="NCBI Taxonomy" id="284812"/>
    <lineage>
        <taxon>Eukaryota</taxon>
        <taxon>Fungi</taxon>
        <taxon>Dikarya</taxon>
        <taxon>Ascomycota</taxon>
        <taxon>Taphrinomycotina</taxon>
        <taxon>Schizosaccharomycetes</taxon>
        <taxon>Schizosaccharomycetales</taxon>
        <taxon>Schizosaccharomycetaceae</taxon>
        <taxon>Schizosaccharomyces</taxon>
    </lineage>
</organism>
<protein>
    <recommendedName>
        <fullName>Uncharacterized protein C30D11.14c</fullName>
    </recommendedName>
</protein>
<dbReference type="EMBL" id="CU329670">
    <property type="protein sequence ID" value="CAA91900.1"/>
    <property type="molecule type" value="Genomic_DNA"/>
</dbReference>
<dbReference type="PIR" id="T38585">
    <property type="entry name" value="S62572"/>
</dbReference>
<dbReference type="RefSeq" id="NP_593203.1">
    <property type="nucleotide sequence ID" value="NM_001018599.2"/>
</dbReference>
<dbReference type="BioGRID" id="278719">
    <property type="interactions" value="26"/>
</dbReference>
<dbReference type="FunCoup" id="Q09911">
    <property type="interactions" value="322"/>
</dbReference>
<dbReference type="STRING" id="284812.Q09911"/>
<dbReference type="iPTMnet" id="Q09911"/>
<dbReference type="PaxDb" id="4896-SPAC30D11.14c.1"/>
<dbReference type="EnsemblFungi" id="SPAC30D11.14c.1">
    <property type="protein sequence ID" value="SPAC30D11.14c.1:pep"/>
    <property type="gene ID" value="SPAC30D11.14c"/>
</dbReference>
<dbReference type="KEGG" id="spo:2542249"/>
<dbReference type="PomBase" id="SPAC30D11.14c"/>
<dbReference type="VEuPathDB" id="FungiDB:SPAC30D11.14c"/>
<dbReference type="eggNOG" id="KOG1960">
    <property type="taxonomic scope" value="Eukaryota"/>
</dbReference>
<dbReference type="HOGENOM" id="CLU_040265_0_0_1"/>
<dbReference type="InParanoid" id="Q09911"/>
<dbReference type="OMA" id="NVREQYQ"/>
<dbReference type="PhylomeDB" id="Q09911"/>
<dbReference type="PRO" id="PR:Q09911"/>
<dbReference type="Proteomes" id="UP000002485">
    <property type="component" value="Chromosome I"/>
</dbReference>
<dbReference type="GO" id="GO:0005634">
    <property type="term" value="C:nucleus"/>
    <property type="evidence" value="ECO:0007005"/>
    <property type="project" value="PomBase"/>
</dbReference>
<dbReference type="GO" id="GO:0003723">
    <property type="term" value="F:RNA binding"/>
    <property type="evidence" value="ECO:0000318"/>
    <property type="project" value="GO_Central"/>
</dbReference>
<dbReference type="GO" id="GO:0045292">
    <property type="term" value="P:mRNA cis splicing, via spliceosome"/>
    <property type="evidence" value="ECO:0000250"/>
    <property type="project" value="PomBase"/>
</dbReference>
<dbReference type="CDD" id="cd22385">
    <property type="entry name" value="KH-I_KHDC4_rpt1"/>
    <property type="match status" value="1"/>
</dbReference>
<dbReference type="CDD" id="cd22386">
    <property type="entry name" value="KH-I_KHDC4_rpt2"/>
    <property type="match status" value="1"/>
</dbReference>
<dbReference type="FunFam" id="3.30.1370.10:FF:000037">
    <property type="entry name" value="KH domain protein"/>
    <property type="match status" value="1"/>
</dbReference>
<dbReference type="Gene3D" id="3.30.1370.10">
    <property type="entry name" value="K Homology domain, type 1"/>
    <property type="match status" value="1"/>
</dbReference>
<dbReference type="InterPro" id="IPR055256">
    <property type="entry name" value="KH_1_KHDC4/BBP-like"/>
</dbReference>
<dbReference type="InterPro" id="IPR004087">
    <property type="entry name" value="KH_dom"/>
</dbReference>
<dbReference type="InterPro" id="IPR036612">
    <property type="entry name" value="KH_dom_type_1_sf"/>
</dbReference>
<dbReference type="InterPro" id="IPR047890">
    <property type="entry name" value="KHDC4_KH-I_first"/>
</dbReference>
<dbReference type="InterPro" id="IPR047889">
    <property type="entry name" value="KHDC4_KH-I_second"/>
</dbReference>
<dbReference type="InterPro" id="IPR056149">
    <property type="entry name" value="PRP5/DDX46/KHDC4_KH"/>
</dbReference>
<dbReference type="InterPro" id="IPR031121">
    <property type="entry name" value="RIK/BLOM7"/>
</dbReference>
<dbReference type="PANTHER" id="PTHR15744">
    <property type="entry name" value="BLOM7"/>
    <property type="match status" value="1"/>
</dbReference>
<dbReference type="PANTHER" id="PTHR15744:SF0">
    <property type="entry name" value="KH HOMOLOGY DOMAIN-CONTAINING PROTEIN 4"/>
    <property type="match status" value="1"/>
</dbReference>
<dbReference type="Pfam" id="PF22675">
    <property type="entry name" value="KH-I_KHDC4-BBP"/>
    <property type="match status" value="1"/>
</dbReference>
<dbReference type="Pfam" id="PF23469">
    <property type="entry name" value="KH_12"/>
    <property type="match status" value="1"/>
</dbReference>
<dbReference type="SMART" id="SM00322">
    <property type="entry name" value="KH"/>
    <property type="match status" value="1"/>
</dbReference>
<dbReference type="SUPFAM" id="SSF54791">
    <property type="entry name" value="Eukaryotic type KH-domain (KH-domain type I)"/>
    <property type="match status" value="2"/>
</dbReference>
<sequence>MSDSRQNSQREDNYSRDRRSRFTEDSYSRRDSQRSGNEAPRESRYYRKEEHLQERSRSRSPARDSRWKSSSSGFAPAHPPIEEPTNNGAEAAAAAARRIAESLQSTKATSSRTSYDHSEGITSTTSASPPSAPAPPLPPSSEGPAVDIPPSMADITSKVIEGDGVFMQDVEINNVRNRYILVRASTLSEIENKSGVQLFSKGRYYPNKALATDKDPPLYLHIVSHNRKDLTVALQEIESWINKDMGPLIDERRFRRREDNERNNSNSPRNFSTHGNGNGENGQPRRKWLEEKVYINLTPSRGFHLRQAIVGPQGAYVKHIQQETRTRVQIKGQGSAFIEPSTNRESDEPIHLCIMSHDPNAIQRAKVLCEDLIASVHQQYKAWKSQPKDRDQNQGNRAYNPPNRNQAFSARDSRQEKTQPTNASPAPLVTPSLPVPSIPAVPGMEAMAMPPGVTSSIAVPTTSSMPLQGMPTMFGAPGVSAPGTEAPGTGTPGLTTPGVDPYAAYGGYNAYVQYYQQQIYAQMHGVSGDQSHPQ</sequence>